<gene>
    <name type="ordered locus">BCE_0952</name>
</gene>
<dbReference type="EMBL" id="AE017194">
    <property type="protein sequence ID" value="AAS39883.1"/>
    <property type="status" value="ALT_INIT"/>
    <property type="molecule type" value="Genomic_DNA"/>
</dbReference>
<dbReference type="KEGG" id="bca:BCE_0952"/>
<dbReference type="HOGENOM" id="CLU_042384_0_0_9"/>
<dbReference type="Proteomes" id="UP000002527">
    <property type="component" value="Chromosome"/>
</dbReference>
<dbReference type="GO" id="GO:0005886">
    <property type="term" value="C:plasma membrane"/>
    <property type="evidence" value="ECO:0007669"/>
    <property type="project" value="UniProtKB-SubCell"/>
</dbReference>
<dbReference type="InterPro" id="IPR007383">
    <property type="entry name" value="DUF445"/>
</dbReference>
<dbReference type="InterPro" id="IPR016991">
    <property type="entry name" value="UCP032178"/>
</dbReference>
<dbReference type="PANTHER" id="PTHR35791">
    <property type="entry name" value="UPF0754 MEMBRANE PROTEIN YHEB"/>
    <property type="match status" value="1"/>
</dbReference>
<dbReference type="PANTHER" id="PTHR35791:SF1">
    <property type="entry name" value="UPF0754 MEMBRANE PROTEIN YHEB"/>
    <property type="match status" value="1"/>
</dbReference>
<dbReference type="Pfam" id="PF04286">
    <property type="entry name" value="DUF445"/>
    <property type="match status" value="1"/>
</dbReference>
<dbReference type="PIRSF" id="PIRSF032178">
    <property type="entry name" value="UCP032178"/>
    <property type="match status" value="1"/>
</dbReference>
<reference key="1">
    <citation type="journal article" date="2004" name="Nucleic Acids Res.">
        <title>The genome sequence of Bacillus cereus ATCC 10987 reveals metabolic adaptations and a large plasmid related to Bacillus anthracis pXO1.</title>
        <authorList>
            <person name="Rasko D.A."/>
            <person name="Ravel J."/>
            <person name="Oekstad O.A."/>
            <person name="Helgason E."/>
            <person name="Cer R.Z."/>
            <person name="Jiang L."/>
            <person name="Shores K.A."/>
            <person name="Fouts D.E."/>
            <person name="Tourasse N.J."/>
            <person name="Angiuoli S.V."/>
            <person name="Kolonay J.F."/>
            <person name="Nelson W.C."/>
            <person name="Kolstoe A.-B."/>
            <person name="Fraser C.M."/>
            <person name="Read T.D."/>
        </authorList>
    </citation>
    <scope>NUCLEOTIDE SEQUENCE [LARGE SCALE GENOMIC DNA]</scope>
    <source>
        <strain>ATCC 10987 / NRS 248</strain>
    </source>
</reference>
<organism>
    <name type="scientific">Bacillus cereus (strain ATCC 10987 / NRS 248)</name>
    <dbReference type="NCBI Taxonomy" id="222523"/>
    <lineage>
        <taxon>Bacteria</taxon>
        <taxon>Bacillati</taxon>
        <taxon>Bacillota</taxon>
        <taxon>Bacilli</taxon>
        <taxon>Bacillales</taxon>
        <taxon>Bacillaceae</taxon>
        <taxon>Bacillus</taxon>
        <taxon>Bacillus cereus group</taxon>
    </lineage>
</organism>
<comment type="subcellular location">
    <subcellularLocation>
        <location evidence="1">Cell membrane</location>
        <topology evidence="1">Multi-pass membrane protein</topology>
    </subcellularLocation>
</comment>
<comment type="similarity">
    <text evidence="3">Belongs to the UPF0754 family.</text>
</comment>
<comment type="sequence caution" evidence="3">
    <conflict type="erroneous initiation">
        <sequence resource="EMBL-CDS" id="AAS39883"/>
    </conflict>
</comment>
<proteinExistence type="inferred from homology"/>
<evidence type="ECO:0000250" key="1"/>
<evidence type="ECO:0000255" key="2"/>
<evidence type="ECO:0000305" key="3"/>
<protein>
    <recommendedName>
        <fullName>UPF0754 membrane protein BCE_0952</fullName>
    </recommendedName>
</protein>
<name>Y952_BACC1</name>
<feature type="chain" id="PRO_0000388271" description="UPF0754 membrane protein BCE_0952">
    <location>
        <begin position="1"/>
        <end position="378"/>
    </location>
</feature>
<feature type="transmembrane region" description="Helical" evidence="2">
    <location>
        <begin position="1"/>
        <end position="21"/>
    </location>
</feature>
<feature type="transmembrane region" description="Helical" evidence="2">
    <location>
        <begin position="357"/>
        <end position="377"/>
    </location>
</feature>
<accession>Q73CW2</accession>
<sequence>MNIWLSMLTTTGLGAIIGGFTNHLAIKMLFRPHRPMYIGKFQVPFTPGLIPKRRDELAVQLGKMVVEHLLTPEGIGKKLTNEEFQKGLIHWAQVEVDKVMTNEQSLRNMLEKWNVAHVEKEVTEKIEQVITEKIQAFLEEYYTYTWEQALPHSVHEKIESAIPNVSAFILGRATQFFESEEGKTRLSKMIDDFFASRGTLLNLVGMFLGNVSVVDRVQPEVIKFLGQDGTKQLLTDVLQKEWEKLKGRDVKEVETFVEKEMIVSSILSAVKVEETVSKFLNQSVQQVCEPVRETMIEKVVPSAVTKVLKWGAKNVESILNKLHLAEIVQQEVSTFSTERLEDLVLSITKNELKMITYLGALLGGMIGIVQGLLLLFLK</sequence>
<keyword id="KW-1003">Cell membrane</keyword>
<keyword id="KW-0472">Membrane</keyword>
<keyword id="KW-0812">Transmembrane</keyword>
<keyword id="KW-1133">Transmembrane helix</keyword>